<proteinExistence type="evidence at protein level"/>
<gene>
    <name type="primary">PPP1R15B</name>
</gene>
<reference key="1">
    <citation type="journal article" date="2004" name="Nat. Genet.">
        <title>Complete sequencing and characterization of 21,243 full-length human cDNAs.</title>
        <authorList>
            <person name="Ota T."/>
            <person name="Suzuki Y."/>
            <person name="Nishikawa T."/>
            <person name="Otsuki T."/>
            <person name="Sugiyama T."/>
            <person name="Irie R."/>
            <person name="Wakamatsu A."/>
            <person name="Hayashi K."/>
            <person name="Sato H."/>
            <person name="Nagai K."/>
            <person name="Kimura K."/>
            <person name="Makita H."/>
            <person name="Sekine M."/>
            <person name="Obayashi M."/>
            <person name="Nishi T."/>
            <person name="Shibahara T."/>
            <person name="Tanaka T."/>
            <person name="Ishii S."/>
            <person name="Yamamoto J."/>
            <person name="Saito K."/>
            <person name="Kawai Y."/>
            <person name="Isono Y."/>
            <person name="Nakamura Y."/>
            <person name="Nagahari K."/>
            <person name="Murakami K."/>
            <person name="Yasuda T."/>
            <person name="Iwayanagi T."/>
            <person name="Wagatsuma M."/>
            <person name="Shiratori A."/>
            <person name="Sudo H."/>
            <person name="Hosoiri T."/>
            <person name="Kaku Y."/>
            <person name="Kodaira H."/>
            <person name="Kondo H."/>
            <person name="Sugawara M."/>
            <person name="Takahashi M."/>
            <person name="Kanda K."/>
            <person name="Yokoi T."/>
            <person name="Furuya T."/>
            <person name="Kikkawa E."/>
            <person name="Omura Y."/>
            <person name="Abe K."/>
            <person name="Kamihara K."/>
            <person name="Katsuta N."/>
            <person name="Sato K."/>
            <person name="Tanikawa M."/>
            <person name="Yamazaki M."/>
            <person name="Ninomiya K."/>
            <person name="Ishibashi T."/>
            <person name="Yamashita H."/>
            <person name="Murakawa K."/>
            <person name="Fujimori K."/>
            <person name="Tanai H."/>
            <person name="Kimata M."/>
            <person name="Watanabe M."/>
            <person name="Hiraoka S."/>
            <person name="Chiba Y."/>
            <person name="Ishida S."/>
            <person name="Ono Y."/>
            <person name="Takiguchi S."/>
            <person name="Watanabe S."/>
            <person name="Yosida M."/>
            <person name="Hotuta T."/>
            <person name="Kusano J."/>
            <person name="Kanehori K."/>
            <person name="Takahashi-Fujii A."/>
            <person name="Hara H."/>
            <person name="Tanase T.-O."/>
            <person name="Nomura Y."/>
            <person name="Togiya S."/>
            <person name="Komai F."/>
            <person name="Hara R."/>
            <person name="Takeuchi K."/>
            <person name="Arita M."/>
            <person name="Imose N."/>
            <person name="Musashino K."/>
            <person name="Yuuki H."/>
            <person name="Oshima A."/>
            <person name="Sasaki N."/>
            <person name="Aotsuka S."/>
            <person name="Yoshikawa Y."/>
            <person name="Matsunawa H."/>
            <person name="Ichihara T."/>
            <person name="Shiohata N."/>
            <person name="Sano S."/>
            <person name="Moriya S."/>
            <person name="Momiyama H."/>
            <person name="Satoh N."/>
            <person name="Takami S."/>
            <person name="Terashima Y."/>
            <person name="Suzuki O."/>
            <person name="Nakagawa S."/>
            <person name="Senoh A."/>
            <person name="Mizoguchi H."/>
            <person name="Goto Y."/>
            <person name="Shimizu F."/>
            <person name="Wakebe H."/>
            <person name="Hishigaki H."/>
            <person name="Watanabe T."/>
            <person name="Sugiyama A."/>
            <person name="Takemoto M."/>
            <person name="Kawakami B."/>
            <person name="Yamazaki M."/>
            <person name="Watanabe K."/>
            <person name="Kumagai A."/>
            <person name="Itakura S."/>
            <person name="Fukuzumi Y."/>
            <person name="Fujimori Y."/>
            <person name="Komiyama M."/>
            <person name="Tashiro H."/>
            <person name="Tanigami A."/>
            <person name="Fujiwara T."/>
            <person name="Ono T."/>
            <person name="Yamada K."/>
            <person name="Fujii Y."/>
            <person name="Ozaki K."/>
            <person name="Hirao M."/>
            <person name="Ohmori Y."/>
            <person name="Kawabata A."/>
            <person name="Hikiji T."/>
            <person name="Kobatake N."/>
            <person name="Inagaki H."/>
            <person name="Ikema Y."/>
            <person name="Okamoto S."/>
            <person name="Okitani R."/>
            <person name="Kawakami T."/>
            <person name="Noguchi S."/>
            <person name="Itoh T."/>
            <person name="Shigeta K."/>
            <person name="Senba T."/>
            <person name="Matsumura K."/>
            <person name="Nakajima Y."/>
            <person name="Mizuno T."/>
            <person name="Morinaga M."/>
            <person name="Sasaki M."/>
            <person name="Togashi T."/>
            <person name="Oyama M."/>
            <person name="Hata H."/>
            <person name="Watanabe M."/>
            <person name="Komatsu T."/>
            <person name="Mizushima-Sugano J."/>
            <person name="Satoh T."/>
            <person name="Shirai Y."/>
            <person name="Takahashi Y."/>
            <person name="Nakagawa K."/>
            <person name="Okumura K."/>
            <person name="Nagase T."/>
            <person name="Nomura N."/>
            <person name="Kikuchi H."/>
            <person name="Masuho Y."/>
            <person name="Yamashita R."/>
            <person name="Nakai K."/>
            <person name="Yada T."/>
            <person name="Nakamura Y."/>
            <person name="Ohara O."/>
            <person name="Isogai T."/>
            <person name="Sugano S."/>
        </authorList>
    </citation>
    <scope>NUCLEOTIDE SEQUENCE [LARGE SCALE MRNA]</scope>
</reference>
<reference key="2">
    <citation type="submission" date="2005-04" db="EMBL/GenBank/DDBJ databases">
        <authorList>
            <person name="Suzuki Y."/>
            <person name="Sugano S."/>
            <person name="Totoki Y."/>
            <person name="Toyoda A."/>
            <person name="Takeda T."/>
            <person name="Sakaki Y."/>
            <person name="Tanaka A."/>
            <person name="Yokoyama S."/>
        </authorList>
    </citation>
    <scope>NUCLEOTIDE SEQUENCE [LARGE SCALE MRNA]</scope>
    <source>
        <tissue>Liver</tissue>
    </source>
</reference>
<reference key="3">
    <citation type="journal article" date="2006" name="Nature">
        <title>The DNA sequence and biological annotation of human chromosome 1.</title>
        <authorList>
            <person name="Gregory S.G."/>
            <person name="Barlow K.F."/>
            <person name="McLay K.E."/>
            <person name="Kaul R."/>
            <person name="Swarbreck D."/>
            <person name="Dunham A."/>
            <person name="Scott C.E."/>
            <person name="Howe K.L."/>
            <person name="Woodfine K."/>
            <person name="Spencer C.C.A."/>
            <person name="Jones M.C."/>
            <person name="Gillson C."/>
            <person name="Searle S."/>
            <person name="Zhou Y."/>
            <person name="Kokocinski F."/>
            <person name="McDonald L."/>
            <person name="Evans R."/>
            <person name="Phillips K."/>
            <person name="Atkinson A."/>
            <person name="Cooper R."/>
            <person name="Jones C."/>
            <person name="Hall R.E."/>
            <person name="Andrews T.D."/>
            <person name="Lloyd C."/>
            <person name="Ainscough R."/>
            <person name="Almeida J.P."/>
            <person name="Ambrose K.D."/>
            <person name="Anderson F."/>
            <person name="Andrew R.W."/>
            <person name="Ashwell R.I.S."/>
            <person name="Aubin K."/>
            <person name="Babbage A.K."/>
            <person name="Bagguley C.L."/>
            <person name="Bailey J."/>
            <person name="Beasley H."/>
            <person name="Bethel G."/>
            <person name="Bird C.P."/>
            <person name="Bray-Allen S."/>
            <person name="Brown J.Y."/>
            <person name="Brown A.J."/>
            <person name="Buckley D."/>
            <person name="Burton J."/>
            <person name="Bye J."/>
            <person name="Carder C."/>
            <person name="Chapman J.C."/>
            <person name="Clark S.Y."/>
            <person name="Clarke G."/>
            <person name="Clee C."/>
            <person name="Cobley V."/>
            <person name="Collier R.E."/>
            <person name="Corby N."/>
            <person name="Coville G.J."/>
            <person name="Davies J."/>
            <person name="Deadman R."/>
            <person name="Dunn M."/>
            <person name="Earthrowl M."/>
            <person name="Ellington A.G."/>
            <person name="Errington H."/>
            <person name="Frankish A."/>
            <person name="Frankland J."/>
            <person name="French L."/>
            <person name="Garner P."/>
            <person name="Garnett J."/>
            <person name="Gay L."/>
            <person name="Ghori M.R.J."/>
            <person name="Gibson R."/>
            <person name="Gilby L.M."/>
            <person name="Gillett W."/>
            <person name="Glithero R.J."/>
            <person name="Grafham D.V."/>
            <person name="Griffiths C."/>
            <person name="Griffiths-Jones S."/>
            <person name="Grocock R."/>
            <person name="Hammond S."/>
            <person name="Harrison E.S.I."/>
            <person name="Hart E."/>
            <person name="Haugen E."/>
            <person name="Heath P.D."/>
            <person name="Holmes S."/>
            <person name="Holt K."/>
            <person name="Howden P.J."/>
            <person name="Hunt A.R."/>
            <person name="Hunt S.E."/>
            <person name="Hunter G."/>
            <person name="Isherwood J."/>
            <person name="James R."/>
            <person name="Johnson C."/>
            <person name="Johnson D."/>
            <person name="Joy A."/>
            <person name="Kay M."/>
            <person name="Kershaw J.K."/>
            <person name="Kibukawa M."/>
            <person name="Kimberley A.M."/>
            <person name="King A."/>
            <person name="Knights A.J."/>
            <person name="Lad H."/>
            <person name="Laird G."/>
            <person name="Lawlor S."/>
            <person name="Leongamornlert D.A."/>
            <person name="Lloyd D.M."/>
            <person name="Loveland J."/>
            <person name="Lovell J."/>
            <person name="Lush M.J."/>
            <person name="Lyne R."/>
            <person name="Martin S."/>
            <person name="Mashreghi-Mohammadi M."/>
            <person name="Matthews L."/>
            <person name="Matthews N.S.W."/>
            <person name="McLaren S."/>
            <person name="Milne S."/>
            <person name="Mistry S."/>
            <person name="Moore M.J.F."/>
            <person name="Nickerson T."/>
            <person name="O'Dell C.N."/>
            <person name="Oliver K."/>
            <person name="Palmeiri A."/>
            <person name="Palmer S.A."/>
            <person name="Parker A."/>
            <person name="Patel D."/>
            <person name="Pearce A.V."/>
            <person name="Peck A.I."/>
            <person name="Pelan S."/>
            <person name="Phelps K."/>
            <person name="Phillimore B.J."/>
            <person name="Plumb R."/>
            <person name="Rajan J."/>
            <person name="Raymond C."/>
            <person name="Rouse G."/>
            <person name="Saenphimmachak C."/>
            <person name="Sehra H.K."/>
            <person name="Sheridan E."/>
            <person name="Shownkeen R."/>
            <person name="Sims S."/>
            <person name="Skuce C.D."/>
            <person name="Smith M."/>
            <person name="Steward C."/>
            <person name="Subramanian S."/>
            <person name="Sycamore N."/>
            <person name="Tracey A."/>
            <person name="Tromans A."/>
            <person name="Van Helmond Z."/>
            <person name="Wall M."/>
            <person name="Wallis J.M."/>
            <person name="White S."/>
            <person name="Whitehead S.L."/>
            <person name="Wilkinson J.E."/>
            <person name="Willey D.L."/>
            <person name="Williams H."/>
            <person name="Wilming L."/>
            <person name="Wray P.W."/>
            <person name="Wu Z."/>
            <person name="Coulson A."/>
            <person name="Vaudin M."/>
            <person name="Sulston J.E."/>
            <person name="Durbin R.M."/>
            <person name="Hubbard T."/>
            <person name="Wooster R."/>
            <person name="Dunham I."/>
            <person name="Carter N.P."/>
            <person name="McVean G."/>
            <person name="Ross M.T."/>
            <person name="Harrow J."/>
            <person name="Olson M.V."/>
            <person name="Beck S."/>
            <person name="Rogers J."/>
            <person name="Bentley D.R."/>
        </authorList>
    </citation>
    <scope>NUCLEOTIDE SEQUENCE [LARGE SCALE GENOMIC DNA]</scope>
</reference>
<reference key="4">
    <citation type="journal article" date="2004" name="Genome Res.">
        <title>The status, quality, and expansion of the NIH full-length cDNA project: the Mammalian Gene Collection (MGC).</title>
        <authorList>
            <consortium name="The MGC Project Team"/>
        </authorList>
    </citation>
    <scope>NUCLEOTIDE SEQUENCE [LARGE SCALE MRNA]</scope>
    <scope>VARIANT GLU-589</scope>
    <source>
        <tissue>Eye</tissue>
    </source>
</reference>
<reference key="5">
    <citation type="journal article" date="2007" name="BMC Genomics">
        <title>The full-ORF clone resource of the German cDNA consortium.</title>
        <authorList>
            <person name="Bechtel S."/>
            <person name="Rosenfelder H."/>
            <person name="Duda A."/>
            <person name="Schmidt C.P."/>
            <person name="Ernst U."/>
            <person name="Wellenreuther R."/>
            <person name="Mehrle A."/>
            <person name="Schuster C."/>
            <person name="Bahr A."/>
            <person name="Bloecker H."/>
            <person name="Heubner D."/>
            <person name="Hoerlein A."/>
            <person name="Michel G."/>
            <person name="Wedler H."/>
            <person name="Koehrer K."/>
            <person name="Ottenwaelder B."/>
            <person name="Poustka A."/>
            <person name="Wiemann S."/>
            <person name="Schupp I."/>
        </authorList>
    </citation>
    <scope>NUCLEOTIDE SEQUENCE [LARGE SCALE MRNA] OF 307-713</scope>
    <source>
        <tissue>Stomach</tissue>
    </source>
</reference>
<reference key="6">
    <citation type="journal article" date="2005" name="Science">
        <title>A selective inhibitor of eIF2alpha dephosphorylation protects cells from ER stress.</title>
        <authorList>
            <person name="Boyce M."/>
            <person name="Bryant K.F."/>
            <person name="Jousse C."/>
            <person name="Long K."/>
            <person name="Harding H.P."/>
            <person name="Scheuner D."/>
            <person name="Kaufman R.J."/>
            <person name="Ma D."/>
            <person name="Coen D.M."/>
            <person name="Ron D."/>
            <person name="Yuan J."/>
        </authorList>
    </citation>
    <scope>INTERACTION WITH PP1</scope>
</reference>
<reference key="7">
    <citation type="journal article" date="2008" name="Proc. Natl. Acad. Sci. U.S.A.">
        <title>A quantitative atlas of mitotic phosphorylation.</title>
        <authorList>
            <person name="Dephoure N."/>
            <person name="Zhou C."/>
            <person name="Villen J."/>
            <person name="Beausoleil S.A."/>
            <person name="Bakalarski C.E."/>
            <person name="Elledge S.J."/>
            <person name="Gygi S.P."/>
        </authorList>
    </citation>
    <scope>IDENTIFICATION BY MASS SPECTROMETRY [LARGE SCALE ANALYSIS]</scope>
    <source>
        <tissue>Cervix carcinoma</tissue>
    </source>
</reference>
<reference key="8">
    <citation type="journal article" date="2013" name="J. Proteome Res.">
        <title>Toward a comprehensive characterization of a human cancer cell phosphoproteome.</title>
        <authorList>
            <person name="Zhou H."/>
            <person name="Di Palma S."/>
            <person name="Preisinger C."/>
            <person name="Peng M."/>
            <person name="Polat A.N."/>
            <person name="Heck A.J."/>
            <person name="Mohammed S."/>
        </authorList>
    </citation>
    <scope>PHOSPHORYLATION [LARGE SCALE ANALYSIS] AT SER-203; SER-205 AND SER-508</scope>
    <scope>IDENTIFICATION BY MASS SPECTROMETRY [LARGE SCALE ANALYSIS]</scope>
    <source>
        <tissue>Cervix carcinoma</tissue>
        <tissue>Erythroleukemia</tissue>
    </source>
</reference>
<reference key="9">
    <citation type="journal article" date="2015" name="Diabetes">
        <title>A missense mutation in PPP1R15B causes a syndrome including diabetes, short stature and microcephaly.</title>
        <authorList>
            <person name="Abdulkarim B."/>
            <person name="Nicolino M."/>
            <person name="Igoillo-Esteve M."/>
            <person name="Daures M."/>
            <person name="Romero S."/>
            <person name="Philippi A."/>
            <person name="Senee V."/>
            <person name="Lopes M."/>
            <person name="Cunha D.A."/>
            <person name="Harding H.P."/>
            <person name="Derbois C."/>
            <person name="Bendelac N."/>
            <person name="Hattersley A.T."/>
            <person name="Eizirik D.L."/>
            <person name="Ron D."/>
            <person name="Cnop M."/>
            <person name="Julier C."/>
        </authorList>
    </citation>
    <scope>INVOLVEMENT IN MSSGM2</scope>
    <scope>VARIANT MSSGM2 CYS-658</scope>
    <scope>CHARACTERIZATION OF VARIANT MSSGM2 CYS-658</scope>
    <scope>FUNCTION</scope>
</reference>
<reference key="10">
    <citation type="journal article" date="2015" name="Hum. Mol. Genet.">
        <title>Homozygous mutation in the eukaryotic translation initiation factor 2alpha phosphatase gene, PPP1R15B, is associated with severe microcephaly, short stature and intellectual disability.</title>
        <authorList>
            <consortium name="Care4Rare Canada Consortium"/>
            <person name="Kernohan K.D."/>
            <person name="Tetreault M."/>
            <person name="Liwak-Muir U."/>
            <person name="Geraghty M.T."/>
            <person name="Qin W."/>
            <person name="Venkateswaran S."/>
            <person name="Davila J."/>
            <person name="Holcik M."/>
            <person name="Majewski J."/>
            <person name="Richer J."/>
            <person name="Boycott K.M."/>
        </authorList>
    </citation>
    <scope>INVOLVEMENT IN MSSGM2</scope>
    <scope>VARIANT MSSGM2 CYS-658</scope>
    <scope>CHARACTERIZATION OF VARIANT MSSGM2 CYS-658</scope>
    <scope>FUNCTION</scope>
</reference>
<reference key="11">
    <citation type="journal article" date="2017" name="Hum. Mutat.">
        <title>A recurrent de novo mutation in ACTG1 causes isolated ocular coloboma.</title>
        <authorList>
            <consortium name="UK10K"/>
            <person name="Rainger J."/>
            <person name="Williamson K.A."/>
            <person name="Soares D.C."/>
            <person name="Truch J."/>
            <person name="Kurian D."/>
            <person name="Gillessen-Kaesbach G."/>
            <person name="Seawright A."/>
            <person name="Prendergast J."/>
            <person name="Halachev M."/>
            <person name="Wheeler A."/>
            <person name="McTeir L."/>
            <person name="Gill A.C."/>
            <person name="van Heyningen V."/>
            <person name="Davey M.G."/>
            <person name="FitzPatrick D.R."/>
        </authorList>
    </citation>
    <scope>VARIANT SER-134</scope>
</reference>
<sequence length="713" mass="79125">MEPGTGGSRKRLGPRAGFRFWPPFFPRRSQAGSSKFPTPLGPENSGNPTLLSSAQPETRVSYWTKLLSQLLAPLPGLLQKVLIWSQLFGGMFPTRWLDFAGVYSALRALKGREKPAAPTAQKSLSSLQLDSSDPSVTSPLDWLEEGIHWQYSPPDLKLELKAKGSALDPAAQAFLLEQQLWGVELLPSSLQSRLYSNRELGSSPSGPLNIQRIDNFSVVSYLLNPSYLDCFPRLEVSYQNSDGNSEVVGFQTLTPESSCLREDHCHPQPLSAELIPASWQGCPPLSTEGLPEIHHLRMKRLEFLQQASKGQDLPTPDQDNGYHSLEEEHSLLRMDPKHCRDNPTQFVPAAGDIPGNTQESTEEKIELLTTEVPLALEEESPSEGCPSSEIPMEKEPGEGRISVVDYSYLEGDLPISARPACSNKLIDYILGGASSDLETSSDPEGEDWDEEAEDDGFDSDSSLSDSDLEQDPEGLHLWNSFCSVDPYNPQNFTATIQTAARIVPEEPSDSEKDLSGKSDLENSSQSGSLPETPEHSSGEEDDWESSADEAESLKLWNSFCNSDDPYNPLNFKAPFQTSGENEKGCRDSKTPSESIVAISECHTLLSCKVQLLGSQESECPDSVQRDVLSGGRHTHVKRKKVTFLEEVTEYYISGDEDRKGPWEEFARDGCRFQKRIQETEDAIGYCLTFEHRERMFNRLQGTCFKGLNVLKQC</sequence>
<comment type="function">
    <text evidence="5 6">Maintains low levels of EIF2S1 phosphorylation in unstressed cells by promoting its dephosphorylation by PP1.</text>
</comment>
<comment type="subunit">
    <text evidence="1 4">Part of a complex containing PPP1R15B, PP1 and NCK1/2 (By similarity). Interacts with PP1.</text>
</comment>
<comment type="interaction">
    <interactant intactId="EBI-2815482">
        <id>Q5SWA1</id>
    </interactant>
    <interactant intactId="EBI-357253">
        <id>P62136</id>
        <label>PPP1CA</label>
    </interactant>
    <organismsDiffer>false</organismsDiffer>
    <experiments>5</experiments>
</comment>
<comment type="interaction">
    <interactant intactId="EBI-2815482">
        <id>Q5SWA1</id>
    </interactant>
    <interactant intactId="EBI-356283">
        <id>P36873</id>
        <label>PPP1CC</label>
    </interactant>
    <organismsDiffer>false</organismsDiffer>
    <experiments>5</experiments>
</comment>
<comment type="interaction">
    <interactant intactId="EBI-2815482">
        <id>Q5SWA1</id>
    </interactant>
    <interactant intactId="EBI-740098">
        <id>P36406</id>
        <label>TRIM23</label>
    </interactant>
    <organismsDiffer>false</organismsDiffer>
    <experiments>3</experiments>
</comment>
<comment type="disease" evidence="5 6">
    <disease id="DI-04652">
        <name>Microcephaly, short stature, and impaired glucose metabolism 2</name>
        <acronym>MSSGM2</acronym>
        <description>An autosomal recessive disease characterized by microcephaly, intellectual disability, short stature, and disturbed glucose metabolism.</description>
        <dbReference type="MIM" id="616817"/>
    </disease>
    <text>The disease is caused by variants affecting the gene represented in this entry.</text>
</comment>
<comment type="disease">
    <text evidence="7">Defects in PPP1R15B has been found in a patient with isolated coloboma, a defect of the eye characterized by the absence of ocular structures due to abnormal morphogenesis of the optic cup and stalk, and the fusion of the fetal fissure (optic fissure). Isolated colobomas may be associated with an abnormally small eye (microphthalmia) or small cornea.</text>
</comment>
<comment type="miscellaneous">
    <text>The phosphatase activity of the PPP1R15B-PP1 complex toward EIF2S1 is specifically inhibited by Salubrinal, a drug that protects cells from endoplasmic reticulum stress.</text>
</comment>
<comment type="similarity">
    <text evidence="8">Belongs to the PPP1R15 family.</text>
</comment>
<protein>
    <recommendedName>
        <fullName>Protein phosphatase 1 regulatory subunit 15B</fullName>
    </recommendedName>
</protein>
<dbReference type="EMBL" id="AK027650">
    <property type="protein sequence ID" value="BAB55266.1"/>
    <property type="molecule type" value="mRNA"/>
</dbReference>
<dbReference type="EMBL" id="AK222877">
    <property type="protein sequence ID" value="BAD96597.1"/>
    <property type="molecule type" value="mRNA"/>
</dbReference>
<dbReference type="EMBL" id="AL606489">
    <property type="status" value="NOT_ANNOTATED_CDS"/>
    <property type="molecule type" value="Genomic_DNA"/>
</dbReference>
<dbReference type="EMBL" id="BC065280">
    <property type="protein sequence ID" value="AAH65280.1"/>
    <property type="molecule type" value="mRNA"/>
</dbReference>
<dbReference type="EMBL" id="AL833746">
    <property type="protein sequence ID" value="CAH56240.1"/>
    <property type="molecule type" value="mRNA"/>
</dbReference>
<dbReference type="CCDS" id="CCDS1445.1"/>
<dbReference type="RefSeq" id="NP_116222.4">
    <property type="nucleotide sequence ID" value="NM_032833.4"/>
</dbReference>
<dbReference type="PDB" id="4V0U">
    <property type="method" value="X-ray"/>
    <property type="resolution" value="7.88 A"/>
    <property type="chains" value="E/G/I/K/O=631-701"/>
</dbReference>
<dbReference type="PDB" id="4V0V">
    <property type="method" value="X-ray"/>
    <property type="resolution" value="1.61 A"/>
    <property type="chains" value="B/D=631-660"/>
</dbReference>
<dbReference type="PDB" id="4V0W">
    <property type="method" value="X-ray"/>
    <property type="resolution" value="1.55 A"/>
    <property type="chains" value="B/D=631-669"/>
</dbReference>
<dbReference type="PDB" id="4V0X">
    <property type="method" value="X-ray"/>
    <property type="resolution" value="1.85 A"/>
    <property type="chains" value="B=631-684"/>
</dbReference>
<dbReference type="PDBsum" id="4V0U"/>
<dbReference type="PDBsum" id="4V0V"/>
<dbReference type="PDBsum" id="4V0W"/>
<dbReference type="PDBsum" id="4V0X"/>
<dbReference type="SMR" id="Q5SWA1"/>
<dbReference type="CORUM" id="Q5SWA1"/>
<dbReference type="FunCoup" id="Q5SWA1">
    <property type="interactions" value="1095"/>
</dbReference>
<dbReference type="IntAct" id="Q5SWA1">
    <property type="interactions" value="53"/>
</dbReference>
<dbReference type="MINT" id="Q5SWA1"/>
<dbReference type="STRING" id="9606.ENSP00000356156"/>
<dbReference type="BindingDB" id="Q5SWA1"/>
<dbReference type="ChEMBL" id="CHEMBL4630830"/>
<dbReference type="GlyGen" id="Q5SWA1">
    <property type="glycosylation" value="1 site, 1 O-linked glycan (1 site)"/>
</dbReference>
<dbReference type="iPTMnet" id="Q5SWA1"/>
<dbReference type="PhosphoSitePlus" id="Q5SWA1"/>
<dbReference type="BioMuta" id="PPP1R15B"/>
<dbReference type="DMDM" id="74743925"/>
<dbReference type="jPOST" id="Q5SWA1"/>
<dbReference type="MassIVE" id="Q5SWA1"/>
<dbReference type="PaxDb" id="9606-ENSP00000356156"/>
<dbReference type="PeptideAtlas" id="Q5SWA1"/>
<dbReference type="ProteomicsDB" id="63971"/>
<dbReference type="Pumba" id="Q5SWA1"/>
<dbReference type="Antibodypedia" id="34557">
    <property type="antibodies" value="111 antibodies from 25 providers"/>
</dbReference>
<dbReference type="Ensembl" id="ENST00000367188.5">
    <property type="protein sequence ID" value="ENSP00000356156.4"/>
    <property type="gene ID" value="ENSG00000158615.10"/>
</dbReference>
<dbReference type="GeneID" id="84919"/>
<dbReference type="KEGG" id="hsa:84919"/>
<dbReference type="MANE-Select" id="ENST00000367188.5">
    <property type="protein sequence ID" value="ENSP00000356156.4"/>
    <property type="RefSeq nucleotide sequence ID" value="NM_032833.5"/>
    <property type="RefSeq protein sequence ID" value="NP_116222.4"/>
</dbReference>
<dbReference type="UCSC" id="uc001hav.5">
    <property type="organism name" value="human"/>
</dbReference>
<dbReference type="AGR" id="HGNC:14951"/>
<dbReference type="CTD" id="84919"/>
<dbReference type="GeneCards" id="PPP1R15B"/>
<dbReference type="HGNC" id="HGNC:14951">
    <property type="gene designation" value="PPP1R15B"/>
</dbReference>
<dbReference type="HPA" id="ENSG00000158615">
    <property type="expression patterns" value="Tissue enhanced (bone)"/>
</dbReference>
<dbReference type="MalaCards" id="PPP1R15B"/>
<dbReference type="MIM" id="613257">
    <property type="type" value="gene"/>
</dbReference>
<dbReference type="MIM" id="616817">
    <property type="type" value="phenotype"/>
</dbReference>
<dbReference type="neXtProt" id="NX_Q5SWA1"/>
<dbReference type="OpenTargets" id="ENSG00000158615"/>
<dbReference type="Orphanet" id="391408">
    <property type="disease" value="Primary microcephaly-mild intellectual disability-young-onset diabetes syndrome"/>
</dbReference>
<dbReference type="PharmGKB" id="PA33633"/>
<dbReference type="VEuPathDB" id="HostDB:ENSG00000158615"/>
<dbReference type="eggNOG" id="ENOG502QV9K">
    <property type="taxonomic scope" value="Eukaryota"/>
</dbReference>
<dbReference type="GeneTree" id="ENSGT00940000154404"/>
<dbReference type="HOGENOM" id="CLU_014797_0_0_1"/>
<dbReference type="InParanoid" id="Q5SWA1"/>
<dbReference type="OMA" id="GDSPTQC"/>
<dbReference type="OrthoDB" id="5976067at2759"/>
<dbReference type="PAN-GO" id="Q5SWA1">
    <property type="GO annotations" value="5 GO annotations based on evolutionary models"/>
</dbReference>
<dbReference type="PhylomeDB" id="Q5SWA1"/>
<dbReference type="TreeFam" id="TF105548"/>
<dbReference type="PathwayCommons" id="Q5SWA1"/>
<dbReference type="SignaLink" id="Q5SWA1"/>
<dbReference type="ChiTaRS" id="PPP1R15B">
    <property type="organism name" value="human"/>
</dbReference>
<dbReference type="EvolutionaryTrace" id="Q5SWA1"/>
<dbReference type="Pharos" id="Q5SWA1">
    <property type="development level" value="Tchem"/>
</dbReference>
<dbReference type="PRO" id="PR:Q5SWA1"/>
<dbReference type="Proteomes" id="UP000005640">
    <property type="component" value="Chromosome 1"/>
</dbReference>
<dbReference type="RNAct" id="Q5SWA1">
    <property type="molecule type" value="protein"/>
</dbReference>
<dbReference type="Bgee" id="ENSG00000158615">
    <property type="expression patterns" value="Expressed in ileal mucosa and 192 other cell types or tissues"/>
</dbReference>
<dbReference type="GO" id="GO:0005783">
    <property type="term" value="C:endoplasmic reticulum"/>
    <property type="evidence" value="ECO:0000318"/>
    <property type="project" value="GO_Central"/>
</dbReference>
<dbReference type="GO" id="GO:0000164">
    <property type="term" value="C:protein phosphatase type 1 complex"/>
    <property type="evidence" value="ECO:0000314"/>
    <property type="project" value="UniProtKB"/>
</dbReference>
<dbReference type="GO" id="GO:0019888">
    <property type="term" value="F:protein phosphatase regulator activity"/>
    <property type="evidence" value="ECO:0000318"/>
    <property type="project" value="GO_Central"/>
</dbReference>
<dbReference type="GO" id="GO:0006983">
    <property type="term" value="P:ER overload response"/>
    <property type="evidence" value="ECO:0007669"/>
    <property type="project" value="Ensembl"/>
</dbReference>
<dbReference type="GO" id="GO:1903898">
    <property type="term" value="P:negative regulation of PERK-mediated unfolded protein response"/>
    <property type="evidence" value="ECO:0000304"/>
    <property type="project" value="ParkinsonsUK-UCL"/>
</dbReference>
<dbReference type="GO" id="GO:0001933">
    <property type="term" value="P:negative regulation of protein phosphorylation"/>
    <property type="evidence" value="ECO:0000315"/>
    <property type="project" value="UniProtKB"/>
</dbReference>
<dbReference type="GO" id="GO:0006417">
    <property type="term" value="P:regulation of translation"/>
    <property type="evidence" value="ECO:0007669"/>
    <property type="project" value="UniProtKB-KW"/>
</dbReference>
<dbReference type="GO" id="GO:0034976">
    <property type="term" value="P:response to endoplasmic reticulum stress"/>
    <property type="evidence" value="ECO:0000318"/>
    <property type="project" value="GO_Central"/>
</dbReference>
<dbReference type="GO" id="GO:0042542">
    <property type="term" value="P:response to hydrogen peroxide"/>
    <property type="evidence" value="ECO:0007669"/>
    <property type="project" value="Ensembl"/>
</dbReference>
<dbReference type="IDEAL" id="IID00730"/>
<dbReference type="InterPro" id="IPR051254">
    <property type="entry name" value="PPP1R15"/>
</dbReference>
<dbReference type="InterPro" id="IPR019523">
    <property type="entry name" value="Prot_Pase1_reg-su15A/B_C"/>
</dbReference>
<dbReference type="InterPro" id="IPR019512">
    <property type="entry name" value="Prot_Pase1_reg-su15B_N"/>
</dbReference>
<dbReference type="PANTHER" id="PTHR16489">
    <property type="entry name" value="GH11727P"/>
    <property type="match status" value="1"/>
</dbReference>
<dbReference type="PANTHER" id="PTHR16489:SF11">
    <property type="entry name" value="PROTEIN PHOSPHATASE 1 REGULATORY SUBUNIT 15B"/>
    <property type="match status" value="1"/>
</dbReference>
<dbReference type="Pfam" id="PF10472">
    <property type="entry name" value="CReP_N"/>
    <property type="match status" value="1"/>
</dbReference>
<dbReference type="Pfam" id="PF10488">
    <property type="entry name" value="PP1c_bdg"/>
    <property type="match status" value="1"/>
</dbReference>
<organism>
    <name type="scientific">Homo sapiens</name>
    <name type="common">Human</name>
    <dbReference type="NCBI Taxonomy" id="9606"/>
    <lineage>
        <taxon>Eukaryota</taxon>
        <taxon>Metazoa</taxon>
        <taxon>Chordata</taxon>
        <taxon>Craniata</taxon>
        <taxon>Vertebrata</taxon>
        <taxon>Euteleostomi</taxon>
        <taxon>Mammalia</taxon>
        <taxon>Eutheria</taxon>
        <taxon>Euarchontoglires</taxon>
        <taxon>Primates</taxon>
        <taxon>Haplorrhini</taxon>
        <taxon>Catarrhini</taxon>
        <taxon>Hominidae</taxon>
        <taxon>Homo</taxon>
    </lineage>
</organism>
<feature type="chain" id="PRO_0000320520" description="Protein phosphatase 1 regulatory subunit 15B">
    <location>
        <begin position="1"/>
        <end position="713"/>
    </location>
</feature>
<feature type="region of interest" description="Disordered" evidence="2">
    <location>
        <begin position="22"/>
        <end position="53"/>
    </location>
</feature>
<feature type="region of interest" description="Disordered" evidence="2">
    <location>
        <begin position="115"/>
        <end position="134"/>
    </location>
</feature>
<feature type="region of interest" description="Disordered" evidence="2">
    <location>
        <begin position="376"/>
        <end position="398"/>
    </location>
</feature>
<feature type="region of interest" description="Disordered" evidence="2">
    <location>
        <begin position="434"/>
        <end position="472"/>
    </location>
</feature>
<feature type="region of interest" description="Disordered" evidence="2">
    <location>
        <begin position="502"/>
        <end position="548"/>
    </location>
</feature>
<feature type="compositionally biased region" description="Polar residues" evidence="2">
    <location>
        <begin position="44"/>
        <end position="53"/>
    </location>
</feature>
<feature type="compositionally biased region" description="Low complexity" evidence="2">
    <location>
        <begin position="123"/>
        <end position="134"/>
    </location>
</feature>
<feature type="compositionally biased region" description="Acidic residues" evidence="2">
    <location>
        <begin position="439"/>
        <end position="458"/>
    </location>
</feature>
<feature type="compositionally biased region" description="Basic and acidic residues" evidence="2">
    <location>
        <begin position="509"/>
        <end position="520"/>
    </location>
</feature>
<feature type="compositionally biased region" description="Acidic residues" evidence="2">
    <location>
        <begin position="539"/>
        <end position="548"/>
    </location>
</feature>
<feature type="modified residue" description="Phosphoserine" evidence="9">
    <location>
        <position position="203"/>
    </location>
</feature>
<feature type="modified residue" description="Phosphoserine" evidence="9">
    <location>
        <position position="205"/>
    </location>
</feature>
<feature type="modified residue" description="Phosphoserine" evidence="9">
    <location>
        <position position="508"/>
    </location>
</feature>
<feature type="sequence variant" id="VAR_039196" description="In dbSNP:rs12094135.">
    <original>P</original>
    <variation>S</variation>
    <location>
        <position position="26"/>
    </location>
</feature>
<feature type="sequence variant" id="VAR_079851" description="Found in a patient with isolated coloboma; uncertain significance; dbSNP:rs755194116." evidence="7">
    <original>P</original>
    <variation>S</variation>
    <location>
        <position position="134"/>
    </location>
</feature>
<feature type="sequence variant" id="VAR_039197" description="In dbSNP:rs4492688.">
    <original>E</original>
    <variation>K</variation>
    <location>
        <position position="144"/>
    </location>
</feature>
<feature type="sequence variant" id="VAR_039198" description="In dbSNP:rs3014626.">
    <original>S</original>
    <variation>N</variation>
    <location>
        <position position="308"/>
    </location>
</feature>
<feature type="sequence variant" id="VAR_039199" description="In dbSNP:rs2089891.">
    <original>E</original>
    <variation>G</variation>
    <location>
        <position position="363"/>
    </location>
</feature>
<feature type="sequence variant" id="VAR_039200" description="In dbSNP:rs17855962." evidence="3">
    <original>K</original>
    <variation>E</variation>
    <location>
        <position position="589"/>
    </location>
</feature>
<feature type="sequence variant" id="VAR_074072" description="In MSSGM2; no effect on localization; increased protein abundance; loss of interaction with protein phosphatase catalytic subunit PP1; decreased dephosphorylation of EIF2S1; dbSNP:rs869025335." evidence="5 6">
    <original>R</original>
    <variation>C</variation>
    <location>
        <position position="658"/>
    </location>
</feature>
<feature type="sequence conflict" description="In Ref. 2; BAD96597." evidence="8" ref="2">
    <original>R</original>
    <variation>Q</variation>
    <location>
        <position position="28"/>
    </location>
</feature>
<feature type="sequence conflict" description="In Ref. 1; BAB55266." evidence="8" ref="1">
    <original>N</original>
    <variation>D</variation>
    <location>
        <position position="215"/>
    </location>
</feature>
<feature type="strand" evidence="10">
    <location>
        <begin position="648"/>
        <end position="652"/>
    </location>
</feature>
<evidence type="ECO:0000250" key="1"/>
<evidence type="ECO:0000256" key="2">
    <source>
        <dbReference type="SAM" id="MobiDB-lite"/>
    </source>
</evidence>
<evidence type="ECO:0000269" key="3">
    <source>
    </source>
</evidence>
<evidence type="ECO:0000269" key="4">
    <source>
    </source>
</evidence>
<evidence type="ECO:0000269" key="5">
    <source>
    </source>
</evidence>
<evidence type="ECO:0000269" key="6">
    <source>
    </source>
</evidence>
<evidence type="ECO:0000269" key="7">
    <source>
    </source>
</evidence>
<evidence type="ECO:0000305" key="8"/>
<evidence type="ECO:0007744" key="9">
    <source>
    </source>
</evidence>
<evidence type="ECO:0007829" key="10">
    <source>
        <dbReference type="PDB" id="4V0W"/>
    </source>
</evidence>
<accession>Q5SWA1</accession>
<accession>Q53GQ4</accession>
<accession>Q658M2</accession>
<accession>Q6P156</accession>
<accession>Q96SN1</accession>
<name>PR15B_HUMAN</name>
<keyword id="KW-0002">3D-structure</keyword>
<keyword id="KW-0219">Diabetes mellitus</keyword>
<keyword id="KW-0225">Disease variant</keyword>
<keyword id="KW-0242">Dwarfism</keyword>
<keyword id="KW-0991">Intellectual disability</keyword>
<keyword id="KW-0597">Phosphoprotein</keyword>
<keyword id="KW-1267">Proteomics identification</keyword>
<keyword id="KW-1185">Reference proteome</keyword>
<keyword id="KW-0810">Translation regulation</keyword>